<accession>Q5HB22</accession>
<accession>Q5FEM7</accession>
<organism>
    <name type="scientific">Ehrlichia ruminantium (strain Welgevonden)</name>
    <dbReference type="NCBI Taxonomy" id="254945"/>
    <lineage>
        <taxon>Bacteria</taxon>
        <taxon>Pseudomonadati</taxon>
        <taxon>Pseudomonadota</taxon>
        <taxon>Alphaproteobacteria</taxon>
        <taxon>Rickettsiales</taxon>
        <taxon>Anaplasmataceae</taxon>
        <taxon>Ehrlichia</taxon>
    </lineage>
</organism>
<gene>
    <name evidence="1" type="primary">rpsB</name>
    <name type="ordered locus">Erum5090</name>
    <name type="ordered locus">ERWE_CDS_05340</name>
</gene>
<keyword id="KW-0687">Ribonucleoprotein</keyword>
<keyword id="KW-0689">Ribosomal protein</keyword>
<sequence length="286" mass="32248">MVDLPKFTMRDLVECGVHFGHKTSRWNPKMAPYIYGVHNDIHIINLQSTVFLLKNALSALYDIVLKRGRVLFIGTKVQASAIIADEATRCGQYYINNRWLGGMLTNWETISLSIKKLREYEKLLQNVDNQFTKKELLLFEKKRAKLDRSIGGICNMGGLPHVIFVIDTNKERIAIREANKLNIPVIAVLDTNSDPTGIDYPIPGNDDAVRSIDFFCKIISDTILEAIRSDLAKSGINVDGIKDFSVERREDFLKMNKDNKSNKSNTINADENIKESDLIGGSNNEG</sequence>
<proteinExistence type="inferred from homology"/>
<evidence type="ECO:0000255" key="1">
    <source>
        <dbReference type="HAMAP-Rule" id="MF_00291"/>
    </source>
</evidence>
<evidence type="ECO:0000256" key="2">
    <source>
        <dbReference type="SAM" id="MobiDB-lite"/>
    </source>
</evidence>
<evidence type="ECO:0000305" key="3"/>
<dbReference type="EMBL" id="CR767821">
    <property type="protein sequence ID" value="CAH58238.1"/>
    <property type="molecule type" value="Genomic_DNA"/>
</dbReference>
<dbReference type="EMBL" id="CR925678">
    <property type="protein sequence ID" value="CAI27028.1"/>
    <property type="molecule type" value="Genomic_DNA"/>
</dbReference>
<dbReference type="RefSeq" id="WP_011155189.1">
    <property type="nucleotide sequence ID" value="NC_005295.2"/>
</dbReference>
<dbReference type="SMR" id="Q5HB22"/>
<dbReference type="GeneID" id="33058073"/>
<dbReference type="KEGG" id="eru:Erum5090"/>
<dbReference type="KEGG" id="erw:ERWE_CDS_05340"/>
<dbReference type="eggNOG" id="COG0052">
    <property type="taxonomic scope" value="Bacteria"/>
</dbReference>
<dbReference type="HOGENOM" id="CLU_040318_2_1_5"/>
<dbReference type="Proteomes" id="UP000001021">
    <property type="component" value="Chromosome"/>
</dbReference>
<dbReference type="GO" id="GO:0022627">
    <property type="term" value="C:cytosolic small ribosomal subunit"/>
    <property type="evidence" value="ECO:0007669"/>
    <property type="project" value="TreeGrafter"/>
</dbReference>
<dbReference type="GO" id="GO:0003735">
    <property type="term" value="F:structural constituent of ribosome"/>
    <property type="evidence" value="ECO:0007669"/>
    <property type="project" value="InterPro"/>
</dbReference>
<dbReference type="GO" id="GO:0006412">
    <property type="term" value="P:translation"/>
    <property type="evidence" value="ECO:0007669"/>
    <property type="project" value="UniProtKB-UniRule"/>
</dbReference>
<dbReference type="CDD" id="cd01425">
    <property type="entry name" value="RPS2"/>
    <property type="match status" value="1"/>
</dbReference>
<dbReference type="Gene3D" id="3.40.50.10490">
    <property type="entry name" value="Glucose-6-phosphate isomerase like protein, domain 1"/>
    <property type="match status" value="1"/>
</dbReference>
<dbReference type="Gene3D" id="1.10.287.610">
    <property type="entry name" value="Helix hairpin bin"/>
    <property type="match status" value="1"/>
</dbReference>
<dbReference type="HAMAP" id="MF_00291_B">
    <property type="entry name" value="Ribosomal_uS2_B"/>
    <property type="match status" value="1"/>
</dbReference>
<dbReference type="InterPro" id="IPR001865">
    <property type="entry name" value="Ribosomal_uS2"/>
</dbReference>
<dbReference type="InterPro" id="IPR005706">
    <property type="entry name" value="Ribosomal_uS2_bac/mit/plastid"/>
</dbReference>
<dbReference type="InterPro" id="IPR018130">
    <property type="entry name" value="Ribosomal_uS2_CS"/>
</dbReference>
<dbReference type="InterPro" id="IPR023591">
    <property type="entry name" value="Ribosomal_uS2_flav_dom_sf"/>
</dbReference>
<dbReference type="NCBIfam" id="TIGR01011">
    <property type="entry name" value="rpsB_bact"/>
    <property type="match status" value="1"/>
</dbReference>
<dbReference type="PANTHER" id="PTHR12534">
    <property type="entry name" value="30S RIBOSOMAL PROTEIN S2 PROKARYOTIC AND ORGANELLAR"/>
    <property type="match status" value="1"/>
</dbReference>
<dbReference type="PANTHER" id="PTHR12534:SF0">
    <property type="entry name" value="SMALL RIBOSOMAL SUBUNIT PROTEIN US2M"/>
    <property type="match status" value="1"/>
</dbReference>
<dbReference type="Pfam" id="PF00318">
    <property type="entry name" value="Ribosomal_S2"/>
    <property type="match status" value="1"/>
</dbReference>
<dbReference type="PRINTS" id="PR00395">
    <property type="entry name" value="RIBOSOMALS2"/>
</dbReference>
<dbReference type="SUPFAM" id="SSF52313">
    <property type="entry name" value="Ribosomal protein S2"/>
    <property type="match status" value="1"/>
</dbReference>
<dbReference type="PROSITE" id="PS00962">
    <property type="entry name" value="RIBOSOMAL_S2_1"/>
    <property type="match status" value="1"/>
</dbReference>
<dbReference type="PROSITE" id="PS00963">
    <property type="entry name" value="RIBOSOMAL_S2_2"/>
    <property type="match status" value="1"/>
</dbReference>
<name>RS2_EHRRW</name>
<reference key="1">
    <citation type="journal article" date="2005" name="Proc. Natl. Acad. Sci. U.S.A.">
        <title>The genome of the heartwater agent Ehrlichia ruminantium contains multiple tandem repeats of actively variable copy number.</title>
        <authorList>
            <person name="Collins N.E."/>
            <person name="Liebenberg J."/>
            <person name="de Villiers E.P."/>
            <person name="Brayton K.A."/>
            <person name="Louw E."/>
            <person name="Pretorius A."/>
            <person name="Faber F.E."/>
            <person name="van Heerden H."/>
            <person name="Josemans A."/>
            <person name="van Kleef M."/>
            <person name="Steyn H.C."/>
            <person name="van Strijp M.F."/>
            <person name="Zweygarth E."/>
            <person name="Jongejan F."/>
            <person name="Maillard J.C."/>
            <person name="Berthier D."/>
            <person name="Botha M."/>
            <person name="Joubert F."/>
            <person name="Corton C.H."/>
            <person name="Thomson N.R."/>
            <person name="Allsopp M.T."/>
            <person name="Allsopp B.A."/>
        </authorList>
    </citation>
    <scope>NUCLEOTIDE SEQUENCE [LARGE SCALE GENOMIC DNA]</scope>
    <source>
        <strain>Welgevonden</strain>
    </source>
</reference>
<reference key="2">
    <citation type="journal article" date="2006" name="J. Bacteriol.">
        <title>Comparative genomic analysis of three strains of Ehrlichia ruminantium reveals an active process of genome size plasticity.</title>
        <authorList>
            <person name="Frutos R."/>
            <person name="Viari A."/>
            <person name="Ferraz C."/>
            <person name="Morgat A."/>
            <person name="Eychenie S."/>
            <person name="Kandassamy Y."/>
            <person name="Chantal I."/>
            <person name="Bensaid A."/>
            <person name="Coissac E."/>
            <person name="Vachiery N."/>
            <person name="Demaille J."/>
            <person name="Martinez D."/>
        </authorList>
    </citation>
    <scope>NUCLEOTIDE SEQUENCE [LARGE SCALE GENOMIC DNA]</scope>
    <source>
        <strain>Welgevonden</strain>
    </source>
</reference>
<protein>
    <recommendedName>
        <fullName evidence="1">Small ribosomal subunit protein uS2</fullName>
    </recommendedName>
    <alternativeName>
        <fullName evidence="3">30S ribosomal protein S2</fullName>
    </alternativeName>
</protein>
<feature type="chain" id="PRO_1000003958" description="Small ribosomal subunit protein uS2">
    <location>
        <begin position="1"/>
        <end position="286"/>
    </location>
</feature>
<feature type="region of interest" description="Disordered" evidence="2">
    <location>
        <begin position="257"/>
        <end position="286"/>
    </location>
</feature>
<comment type="similarity">
    <text evidence="1">Belongs to the universal ribosomal protein uS2 family.</text>
</comment>